<proteinExistence type="inferred from homology"/>
<reference key="1">
    <citation type="journal article" date="2009" name="Nat. Genet.">
        <title>Comparative genomic and phylogeographic analysis of Mycobacterium leprae.</title>
        <authorList>
            <person name="Monot M."/>
            <person name="Honore N."/>
            <person name="Garnier T."/>
            <person name="Zidane N."/>
            <person name="Sherafi D."/>
            <person name="Paniz-Mondolfi A."/>
            <person name="Matsuoka M."/>
            <person name="Taylor G.M."/>
            <person name="Donoghue H.D."/>
            <person name="Bouwman A."/>
            <person name="Mays S."/>
            <person name="Watson C."/>
            <person name="Lockwood D."/>
            <person name="Khamispour A."/>
            <person name="Dowlati Y."/>
            <person name="Jianping S."/>
            <person name="Rea T.H."/>
            <person name="Vera-Cabrera L."/>
            <person name="Stefani M.M."/>
            <person name="Banu S."/>
            <person name="Macdonald M."/>
            <person name="Sapkota B.R."/>
            <person name="Spencer J.S."/>
            <person name="Thomas J."/>
            <person name="Harshman K."/>
            <person name="Singh P."/>
            <person name="Busso P."/>
            <person name="Gattiker A."/>
            <person name="Rougemont J."/>
            <person name="Brennan P.J."/>
            <person name="Cole S.T."/>
        </authorList>
    </citation>
    <scope>NUCLEOTIDE SEQUENCE [LARGE SCALE GENOMIC DNA]</scope>
    <source>
        <strain>Br4923</strain>
    </source>
</reference>
<organism>
    <name type="scientific">Mycobacterium leprae (strain Br4923)</name>
    <dbReference type="NCBI Taxonomy" id="561304"/>
    <lineage>
        <taxon>Bacteria</taxon>
        <taxon>Bacillati</taxon>
        <taxon>Actinomycetota</taxon>
        <taxon>Actinomycetes</taxon>
        <taxon>Mycobacteriales</taxon>
        <taxon>Mycobacteriaceae</taxon>
        <taxon>Mycobacterium</taxon>
    </lineage>
</organism>
<feature type="chain" id="PRO_1000116650" description="Holliday junction branch migration complex subunit RuvB">
    <location>
        <begin position="1"/>
        <end position="349"/>
    </location>
</feature>
<feature type="region of interest" description="Large ATPase domain (RuvB-L)" evidence="1">
    <location>
        <begin position="1"/>
        <end position="186"/>
    </location>
</feature>
<feature type="region of interest" description="Small ATPAse domain (RuvB-S)" evidence="1">
    <location>
        <begin position="187"/>
        <end position="257"/>
    </location>
</feature>
<feature type="region of interest" description="Head domain (RuvB-H)" evidence="1">
    <location>
        <begin position="260"/>
        <end position="349"/>
    </location>
</feature>
<feature type="binding site" evidence="1">
    <location>
        <position position="25"/>
    </location>
    <ligand>
        <name>ATP</name>
        <dbReference type="ChEBI" id="CHEBI:30616"/>
    </ligand>
</feature>
<feature type="binding site" evidence="1">
    <location>
        <position position="26"/>
    </location>
    <ligand>
        <name>ATP</name>
        <dbReference type="ChEBI" id="CHEBI:30616"/>
    </ligand>
</feature>
<feature type="binding site" evidence="1">
    <location>
        <position position="67"/>
    </location>
    <ligand>
        <name>ATP</name>
        <dbReference type="ChEBI" id="CHEBI:30616"/>
    </ligand>
</feature>
<feature type="binding site" evidence="1">
    <location>
        <position position="70"/>
    </location>
    <ligand>
        <name>ATP</name>
        <dbReference type="ChEBI" id="CHEBI:30616"/>
    </ligand>
</feature>
<feature type="binding site" evidence="1">
    <location>
        <position position="71"/>
    </location>
    <ligand>
        <name>ATP</name>
        <dbReference type="ChEBI" id="CHEBI:30616"/>
    </ligand>
</feature>
<feature type="binding site" evidence="1">
    <location>
        <position position="71"/>
    </location>
    <ligand>
        <name>Mg(2+)</name>
        <dbReference type="ChEBI" id="CHEBI:18420"/>
    </ligand>
</feature>
<feature type="binding site" evidence="1">
    <location>
        <position position="72"/>
    </location>
    <ligand>
        <name>ATP</name>
        <dbReference type="ChEBI" id="CHEBI:30616"/>
    </ligand>
</feature>
<feature type="binding site" evidence="1">
    <location>
        <begin position="133"/>
        <end position="135"/>
    </location>
    <ligand>
        <name>ATP</name>
        <dbReference type="ChEBI" id="CHEBI:30616"/>
    </ligand>
</feature>
<feature type="binding site" evidence="1">
    <location>
        <position position="176"/>
    </location>
    <ligand>
        <name>ATP</name>
        <dbReference type="ChEBI" id="CHEBI:30616"/>
    </ligand>
</feature>
<feature type="binding site" evidence="1">
    <location>
        <position position="186"/>
    </location>
    <ligand>
        <name>ATP</name>
        <dbReference type="ChEBI" id="CHEBI:30616"/>
    </ligand>
</feature>
<feature type="binding site" evidence="1">
    <location>
        <position position="223"/>
    </location>
    <ligand>
        <name>ATP</name>
        <dbReference type="ChEBI" id="CHEBI:30616"/>
    </ligand>
</feature>
<feature type="binding site" evidence="1">
    <location>
        <position position="315"/>
    </location>
    <ligand>
        <name>DNA</name>
        <dbReference type="ChEBI" id="CHEBI:16991"/>
    </ligand>
</feature>
<feature type="binding site" evidence="1">
    <location>
        <position position="320"/>
    </location>
    <ligand>
        <name>DNA</name>
        <dbReference type="ChEBI" id="CHEBI:16991"/>
    </ligand>
</feature>
<gene>
    <name evidence="1" type="primary">ruvB</name>
    <name type="ordered locus">MLBr00483</name>
</gene>
<protein>
    <recommendedName>
        <fullName evidence="1">Holliday junction branch migration complex subunit RuvB</fullName>
        <ecNumber evidence="1">3.6.4.-</ecNumber>
    </recommendedName>
</protein>
<dbReference type="EC" id="3.6.4.-" evidence="1"/>
<dbReference type="EMBL" id="FM211192">
    <property type="protein sequence ID" value="CAR70576.1"/>
    <property type="molecule type" value="Genomic_DNA"/>
</dbReference>
<dbReference type="SMR" id="B8ZUI2"/>
<dbReference type="KEGG" id="mlb:MLBr00483"/>
<dbReference type="HOGENOM" id="CLU_055599_1_0_11"/>
<dbReference type="Proteomes" id="UP000006900">
    <property type="component" value="Chromosome"/>
</dbReference>
<dbReference type="GO" id="GO:0005737">
    <property type="term" value="C:cytoplasm"/>
    <property type="evidence" value="ECO:0007669"/>
    <property type="project" value="UniProtKB-SubCell"/>
</dbReference>
<dbReference type="GO" id="GO:0048476">
    <property type="term" value="C:Holliday junction resolvase complex"/>
    <property type="evidence" value="ECO:0007669"/>
    <property type="project" value="UniProtKB-UniRule"/>
</dbReference>
<dbReference type="GO" id="GO:0005524">
    <property type="term" value="F:ATP binding"/>
    <property type="evidence" value="ECO:0007669"/>
    <property type="project" value="UniProtKB-UniRule"/>
</dbReference>
<dbReference type="GO" id="GO:0016887">
    <property type="term" value="F:ATP hydrolysis activity"/>
    <property type="evidence" value="ECO:0007669"/>
    <property type="project" value="InterPro"/>
</dbReference>
<dbReference type="GO" id="GO:0000400">
    <property type="term" value="F:four-way junction DNA binding"/>
    <property type="evidence" value="ECO:0007669"/>
    <property type="project" value="UniProtKB-UniRule"/>
</dbReference>
<dbReference type="GO" id="GO:0009378">
    <property type="term" value="F:four-way junction helicase activity"/>
    <property type="evidence" value="ECO:0007669"/>
    <property type="project" value="InterPro"/>
</dbReference>
<dbReference type="GO" id="GO:0006310">
    <property type="term" value="P:DNA recombination"/>
    <property type="evidence" value="ECO:0007669"/>
    <property type="project" value="UniProtKB-UniRule"/>
</dbReference>
<dbReference type="GO" id="GO:0006281">
    <property type="term" value="P:DNA repair"/>
    <property type="evidence" value="ECO:0007669"/>
    <property type="project" value="UniProtKB-UniRule"/>
</dbReference>
<dbReference type="CDD" id="cd00009">
    <property type="entry name" value="AAA"/>
    <property type="match status" value="1"/>
</dbReference>
<dbReference type="Gene3D" id="1.10.8.60">
    <property type="match status" value="1"/>
</dbReference>
<dbReference type="Gene3D" id="3.40.50.300">
    <property type="entry name" value="P-loop containing nucleotide triphosphate hydrolases"/>
    <property type="match status" value="1"/>
</dbReference>
<dbReference type="Gene3D" id="1.10.10.10">
    <property type="entry name" value="Winged helix-like DNA-binding domain superfamily/Winged helix DNA-binding domain"/>
    <property type="match status" value="1"/>
</dbReference>
<dbReference type="HAMAP" id="MF_00016">
    <property type="entry name" value="DNA_HJ_migration_RuvB"/>
    <property type="match status" value="1"/>
</dbReference>
<dbReference type="InterPro" id="IPR003593">
    <property type="entry name" value="AAA+_ATPase"/>
</dbReference>
<dbReference type="InterPro" id="IPR041445">
    <property type="entry name" value="AAA_lid_4"/>
</dbReference>
<dbReference type="InterPro" id="IPR004605">
    <property type="entry name" value="DNA_helicase_Holl-junc_RuvB"/>
</dbReference>
<dbReference type="InterPro" id="IPR027417">
    <property type="entry name" value="P-loop_NTPase"/>
</dbReference>
<dbReference type="InterPro" id="IPR008824">
    <property type="entry name" value="RuvB-like_N"/>
</dbReference>
<dbReference type="InterPro" id="IPR008823">
    <property type="entry name" value="RuvB_C"/>
</dbReference>
<dbReference type="InterPro" id="IPR036388">
    <property type="entry name" value="WH-like_DNA-bd_sf"/>
</dbReference>
<dbReference type="InterPro" id="IPR036390">
    <property type="entry name" value="WH_DNA-bd_sf"/>
</dbReference>
<dbReference type="NCBIfam" id="NF000868">
    <property type="entry name" value="PRK00080.1"/>
    <property type="match status" value="1"/>
</dbReference>
<dbReference type="NCBIfam" id="TIGR00635">
    <property type="entry name" value="ruvB"/>
    <property type="match status" value="1"/>
</dbReference>
<dbReference type="PANTHER" id="PTHR42848">
    <property type="match status" value="1"/>
</dbReference>
<dbReference type="PANTHER" id="PTHR42848:SF1">
    <property type="entry name" value="HOLLIDAY JUNCTION BRANCH MIGRATION COMPLEX SUBUNIT RUVB"/>
    <property type="match status" value="1"/>
</dbReference>
<dbReference type="Pfam" id="PF17864">
    <property type="entry name" value="AAA_lid_4"/>
    <property type="match status" value="1"/>
</dbReference>
<dbReference type="Pfam" id="PF05491">
    <property type="entry name" value="RuvB_C"/>
    <property type="match status" value="1"/>
</dbReference>
<dbReference type="Pfam" id="PF05496">
    <property type="entry name" value="RuvB_N"/>
    <property type="match status" value="1"/>
</dbReference>
<dbReference type="SMART" id="SM00382">
    <property type="entry name" value="AAA"/>
    <property type="match status" value="1"/>
</dbReference>
<dbReference type="SUPFAM" id="SSF52540">
    <property type="entry name" value="P-loop containing nucleoside triphosphate hydrolases"/>
    <property type="match status" value="1"/>
</dbReference>
<dbReference type="SUPFAM" id="SSF46785">
    <property type="entry name" value="Winged helix' DNA-binding domain"/>
    <property type="match status" value="1"/>
</dbReference>
<name>RUVB_MYCLB</name>
<keyword id="KW-0067">ATP-binding</keyword>
<keyword id="KW-0963">Cytoplasm</keyword>
<keyword id="KW-0227">DNA damage</keyword>
<keyword id="KW-0233">DNA recombination</keyword>
<keyword id="KW-0234">DNA repair</keyword>
<keyword id="KW-0238">DNA-binding</keyword>
<keyword id="KW-0378">Hydrolase</keyword>
<keyword id="KW-0547">Nucleotide-binding</keyword>
<sequence length="349" mass="37266">MSEDYLDRDVSPALTVGEADIDVSLRPRSLREFIGQPRVREQLQLVIEGAKNRGATPDHILLSGPPGLGKTSLAMIIAAELGSSLRMTSGPALERAGDLAVMLSNLVEHDVLFIDEIHRIARPAEEMLYLAMEDFRVDVIVGKGPGATSIPLEVAPFTLVGATTRSGALTGPLRDRFGFTAHMDFYEPTELEGVLARAAGILGIELGVEAGAEIARRSRGTPRIANRLLRRVRDFAEVRADGVITRDVAKAALAVYDVDELGLDRLDRAVLSALTRSFGGGPVGVSTLAVAVGEEATTVEEVCEPFLVRAGMVARTPRGRVATAQAWTYLCMTPPVGVTGLSQPGLFES</sequence>
<accession>B8ZUI2</accession>
<comment type="function">
    <text evidence="1">The RuvA-RuvB-RuvC complex processes Holliday junction (HJ) DNA during genetic recombination and DNA repair, while the RuvA-RuvB complex plays an important role in the rescue of blocked DNA replication forks via replication fork reversal (RFR). RuvA specifically binds to HJ cruciform DNA, conferring on it an open structure. The RuvB hexamer acts as an ATP-dependent pump, pulling dsDNA into and through the RuvAB complex. RuvB forms 2 homohexamers on either side of HJ DNA bound by 1 or 2 RuvA tetramers; 4 subunits per hexamer contact DNA at a time. Coordinated motions by a converter formed by DNA-disengaged RuvB subunits stimulates ATP hydrolysis and nucleotide exchange. Immobilization of the converter enables RuvB to convert the ATP-contained energy into a lever motion, pulling 2 nucleotides of DNA out of the RuvA tetramer per ATP hydrolyzed, thus driving DNA branch migration. The RuvB motors rotate together with the DNA substrate, which together with the progressing nucleotide cycle form the mechanistic basis for DNA recombination by continuous HJ branch migration. Branch migration allows RuvC to scan DNA until it finds its consensus sequence, where it cleaves and resolves cruciform DNA.</text>
</comment>
<comment type="catalytic activity">
    <reaction evidence="1">
        <text>ATP + H2O = ADP + phosphate + H(+)</text>
        <dbReference type="Rhea" id="RHEA:13065"/>
        <dbReference type="ChEBI" id="CHEBI:15377"/>
        <dbReference type="ChEBI" id="CHEBI:15378"/>
        <dbReference type="ChEBI" id="CHEBI:30616"/>
        <dbReference type="ChEBI" id="CHEBI:43474"/>
        <dbReference type="ChEBI" id="CHEBI:456216"/>
    </reaction>
</comment>
<comment type="subunit">
    <text evidence="1">Homohexamer. Forms an RuvA(8)-RuvB(12)-Holliday junction (HJ) complex. HJ DNA is sandwiched between 2 RuvA tetramers; dsDNA enters through RuvA and exits via RuvB. An RuvB hexamer assembles on each DNA strand where it exits the tetramer. Each RuvB hexamer is contacted by two RuvA subunits (via domain III) on 2 adjacent RuvB subunits; this complex drives branch migration. In the full resolvosome a probable DNA-RuvA(4)-RuvB(12)-RuvC(2) complex forms which resolves the HJ.</text>
</comment>
<comment type="subcellular location">
    <subcellularLocation>
        <location evidence="1">Cytoplasm</location>
    </subcellularLocation>
</comment>
<comment type="domain">
    <text evidence="1">Has 3 domains, the large (RuvB-L) and small ATPase (RuvB-S) domains and the C-terminal head (RuvB-H) domain. The head domain binds DNA, while the ATPase domains jointly bind ATP, ADP or are empty depending on the state of the subunit in the translocation cycle. During a single DNA translocation step the structure of each domain remains the same, but their relative positions change.</text>
</comment>
<comment type="similarity">
    <text evidence="1">Belongs to the RuvB family.</text>
</comment>
<evidence type="ECO:0000255" key="1">
    <source>
        <dbReference type="HAMAP-Rule" id="MF_00016"/>
    </source>
</evidence>